<proteinExistence type="inferred from homology"/>
<name>RL14_GLUDA</name>
<dbReference type="EMBL" id="AM889285">
    <property type="protein sequence ID" value="CAP57337.1"/>
    <property type="molecule type" value="Genomic_DNA"/>
</dbReference>
<dbReference type="EMBL" id="CP001189">
    <property type="protein sequence ID" value="ACI52706.1"/>
    <property type="molecule type" value="Genomic_DNA"/>
</dbReference>
<dbReference type="RefSeq" id="WP_007399629.1">
    <property type="nucleotide sequence ID" value="NC_011365.1"/>
</dbReference>
<dbReference type="SMR" id="A9H3N4"/>
<dbReference type="STRING" id="272568.GDI3394"/>
<dbReference type="GeneID" id="98313185"/>
<dbReference type="KEGG" id="gdi:GDI3394"/>
<dbReference type="KEGG" id="gdj:Gdia_2976"/>
<dbReference type="eggNOG" id="COG0093">
    <property type="taxonomic scope" value="Bacteria"/>
</dbReference>
<dbReference type="HOGENOM" id="CLU_095071_2_1_5"/>
<dbReference type="OrthoDB" id="9806379at2"/>
<dbReference type="Proteomes" id="UP000001176">
    <property type="component" value="Chromosome"/>
</dbReference>
<dbReference type="GO" id="GO:0022625">
    <property type="term" value="C:cytosolic large ribosomal subunit"/>
    <property type="evidence" value="ECO:0007669"/>
    <property type="project" value="TreeGrafter"/>
</dbReference>
<dbReference type="GO" id="GO:0070180">
    <property type="term" value="F:large ribosomal subunit rRNA binding"/>
    <property type="evidence" value="ECO:0007669"/>
    <property type="project" value="TreeGrafter"/>
</dbReference>
<dbReference type="GO" id="GO:0003735">
    <property type="term" value="F:structural constituent of ribosome"/>
    <property type="evidence" value="ECO:0007669"/>
    <property type="project" value="InterPro"/>
</dbReference>
<dbReference type="GO" id="GO:0006412">
    <property type="term" value="P:translation"/>
    <property type="evidence" value="ECO:0007669"/>
    <property type="project" value="UniProtKB-UniRule"/>
</dbReference>
<dbReference type="CDD" id="cd00337">
    <property type="entry name" value="Ribosomal_uL14"/>
    <property type="match status" value="1"/>
</dbReference>
<dbReference type="FunFam" id="2.40.150.20:FF:000001">
    <property type="entry name" value="50S ribosomal protein L14"/>
    <property type="match status" value="1"/>
</dbReference>
<dbReference type="Gene3D" id="2.40.150.20">
    <property type="entry name" value="Ribosomal protein L14"/>
    <property type="match status" value="1"/>
</dbReference>
<dbReference type="HAMAP" id="MF_01367">
    <property type="entry name" value="Ribosomal_uL14"/>
    <property type="match status" value="1"/>
</dbReference>
<dbReference type="InterPro" id="IPR000218">
    <property type="entry name" value="Ribosomal_uL14"/>
</dbReference>
<dbReference type="InterPro" id="IPR005745">
    <property type="entry name" value="Ribosomal_uL14_bac-type"/>
</dbReference>
<dbReference type="InterPro" id="IPR019972">
    <property type="entry name" value="Ribosomal_uL14_CS"/>
</dbReference>
<dbReference type="InterPro" id="IPR036853">
    <property type="entry name" value="Ribosomal_uL14_sf"/>
</dbReference>
<dbReference type="NCBIfam" id="TIGR01067">
    <property type="entry name" value="rplN_bact"/>
    <property type="match status" value="1"/>
</dbReference>
<dbReference type="PANTHER" id="PTHR11761">
    <property type="entry name" value="50S/60S RIBOSOMAL PROTEIN L14/L23"/>
    <property type="match status" value="1"/>
</dbReference>
<dbReference type="PANTHER" id="PTHR11761:SF3">
    <property type="entry name" value="LARGE RIBOSOMAL SUBUNIT PROTEIN UL14M"/>
    <property type="match status" value="1"/>
</dbReference>
<dbReference type="Pfam" id="PF00238">
    <property type="entry name" value="Ribosomal_L14"/>
    <property type="match status" value="1"/>
</dbReference>
<dbReference type="SMART" id="SM01374">
    <property type="entry name" value="Ribosomal_L14"/>
    <property type="match status" value="1"/>
</dbReference>
<dbReference type="SUPFAM" id="SSF50193">
    <property type="entry name" value="Ribosomal protein L14"/>
    <property type="match status" value="1"/>
</dbReference>
<dbReference type="PROSITE" id="PS00049">
    <property type="entry name" value="RIBOSOMAL_L14"/>
    <property type="match status" value="1"/>
</dbReference>
<sequence>MIHPETNLDVADNSGARQVQCIKVLGGSKRKTASVGDVIVVSVKEAIPRGKVKKGDVHQAVIVRTSYPVRRADGSAIRFDRNAAVLINKQQEPIGTRIFGPVVRELRARKFMKIISLAPEVL</sequence>
<protein>
    <recommendedName>
        <fullName evidence="1">Large ribosomal subunit protein uL14</fullName>
    </recommendedName>
    <alternativeName>
        <fullName evidence="2">50S ribosomal protein L14</fullName>
    </alternativeName>
</protein>
<organism>
    <name type="scientific">Gluconacetobacter diazotrophicus (strain ATCC 49037 / DSM 5601 / CCUG 37298 / CIP 103539 / LMG 7603 / PAl5)</name>
    <dbReference type="NCBI Taxonomy" id="272568"/>
    <lineage>
        <taxon>Bacteria</taxon>
        <taxon>Pseudomonadati</taxon>
        <taxon>Pseudomonadota</taxon>
        <taxon>Alphaproteobacteria</taxon>
        <taxon>Acetobacterales</taxon>
        <taxon>Acetobacteraceae</taxon>
        <taxon>Gluconacetobacter</taxon>
    </lineage>
</organism>
<gene>
    <name evidence="1" type="primary">rplN</name>
    <name type="ordered locus">GDI3394</name>
    <name type="ordered locus">Gdia_2976</name>
</gene>
<accession>A9H3N4</accession>
<accession>B5ZIH3</accession>
<reference key="1">
    <citation type="journal article" date="2009" name="BMC Genomics">
        <title>Complete genome sequence of the sugarcane nitrogen-fixing endophyte Gluconacetobacter diazotrophicus Pal5.</title>
        <authorList>
            <person name="Bertalan M."/>
            <person name="Albano R."/>
            <person name="de Padua V."/>
            <person name="Rouws L."/>
            <person name="Rojas C."/>
            <person name="Hemerly A."/>
            <person name="Teixeira K."/>
            <person name="Schwab S."/>
            <person name="Araujo J."/>
            <person name="Oliveira A."/>
            <person name="Franca L."/>
            <person name="Magalhaes V."/>
            <person name="Alqueres S."/>
            <person name="Cardoso A."/>
            <person name="Almeida W."/>
            <person name="Loureiro M.M."/>
            <person name="Nogueira E."/>
            <person name="Cidade D."/>
            <person name="Oliveira D."/>
            <person name="Simao T."/>
            <person name="Macedo J."/>
            <person name="Valadao A."/>
            <person name="Dreschsel M."/>
            <person name="Freitas F."/>
            <person name="Vidal M."/>
            <person name="Guedes H."/>
            <person name="Rodrigues E."/>
            <person name="Meneses C."/>
            <person name="Brioso P."/>
            <person name="Pozzer L."/>
            <person name="Figueiredo D."/>
            <person name="Montano H."/>
            <person name="Junior J."/>
            <person name="de Souza Filho G."/>
            <person name="Martin Quintana Flores V."/>
            <person name="Ferreira B."/>
            <person name="Branco A."/>
            <person name="Gonzalez P."/>
            <person name="Guillobel H."/>
            <person name="Lemos M."/>
            <person name="Seibel L."/>
            <person name="Macedo J."/>
            <person name="Alves-Ferreira M."/>
            <person name="Sachetto-Martins G."/>
            <person name="Coelho A."/>
            <person name="Santos E."/>
            <person name="Amaral G."/>
            <person name="Neves A."/>
            <person name="Pacheco A.B."/>
            <person name="Carvalho D."/>
            <person name="Lery L."/>
            <person name="Bisch P."/>
            <person name="Rossle S.C."/>
            <person name="Urmenyi T."/>
            <person name="Rael Pereira A."/>
            <person name="Silva R."/>
            <person name="Rondinelli E."/>
            <person name="von Kruger W."/>
            <person name="Martins O."/>
            <person name="Baldani J.I."/>
            <person name="Ferreira P.C."/>
        </authorList>
    </citation>
    <scope>NUCLEOTIDE SEQUENCE [LARGE SCALE GENOMIC DNA]</scope>
    <source>
        <strain>ATCC 49037 / DSM 5601 / CCUG 37298 / CIP 103539 / LMG 7603 / PAl5</strain>
    </source>
</reference>
<reference key="2">
    <citation type="journal article" date="2010" name="Stand. Genomic Sci.">
        <title>Two genome sequences of the same bacterial strain, Gluconacetobacter diazotrophicus PAl 5, suggest a new standard in genome sequence submission.</title>
        <authorList>
            <person name="Giongo A."/>
            <person name="Tyler H.L."/>
            <person name="Zipperer U.N."/>
            <person name="Triplett E.W."/>
        </authorList>
    </citation>
    <scope>NUCLEOTIDE SEQUENCE [LARGE SCALE GENOMIC DNA]</scope>
    <source>
        <strain>ATCC 49037 / DSM 5601 / CCUG 37298 / CIP 103539 / LMG 7603 / PAl5</strain>
    </source>
</reference>
<comment type="function">
    <text evidence="1">Binds to 23S rRNA. Forms part of two intersubunit bridges in the 70S ribosome.</text>
</comment>
<comment type="subunit">
    <text evidence="1">Part of the 50S ribosomal subunit. Forms a cluster with proteins L3 and L19. In the 70S ribosome, L14 and L19 interact and together make contacts with the 16S rRNA in bridges B5 and B8.</text>
</comment>
<comment type="similarity">
    <text evidence="1">Belongs to the universal ribosomal protein uL14 family.</text>
</comment>
<feature type="chain" id="PRO_1000087131" description="Large ribosomal subunit protein uL14">
    <location>
        <begin position="1"/>
        <end position="122"/>
    </location>
</feature>
<evidence type="ECO:0000255" key="1">
    <source>
        <dbReference type="HAMAP-Rule" id="MF_01367"/>
    </source>
</evidence>
<evidence type="ECO:0000305" key="2"/>
<keyword id="KW-1185">Reference proteome</keyword>
<keyword id="KW-0687">Ribonucleoprotein</keyword>
<keyword id="KW-0689">Ribosomal protein</keyword>
<keyword id="KW-0694">RNA-binding</keyword>
<keyword id="KW-0699">rRNA-binding</keyword>